<organism>
    <name type="scientific">Haemophilus influenzae (strain ATCC 51907 / DSM 11121 / KW20 / Rd)</name>
    <dbReference type="NCBI Taxonomy" id="71421"/>
    <lineage>
        <taxon>Bacteria</taxon>
        <taxon>Pseudomonadati</taxon>
        <taxon>Pseudomonadota</taxon>
        <taxon>Gammaproteobacteria</taxon>
        <taxon>Pasteurellales</taxon>
        <taxon>Pasteurellaceae</taxon>
        <taxon>Haemophilus</taxon>
    </lineage>
</organism>
<dbReference type="EC" id="6.1.1.16"/>
<dbReference type="EMBL" id="L42023">
    <property type="protein sequence ID" value="AAC21753.1"/>
    <property type="molecule type" value="Genomic_DNA"/>
</dbReference>
<dbReference type="PIR" id="C64047">
    <property type="entry name" value="C64047"/>
</dbReference>
<dbReference type="RefSeq" id="NP_438251.1">
    <property type="nucleotide sequence ID" value="NC_000907.1"/>
</dbReference>
<dbReference type="SMR" id="P43816"/>
<dbReference type="STRING" id="71421.HI_0078"/>
<dbReference type="EnsemblBacteria" id="AAC21753">
    <property type="protein sequence ID" value="AAC21753"/>
    <property type="gene ID" value="HI_0078"/>
</dbReference>
<dbReference type="KEGG" id="hin:HI_0078"/>
<dbReference type="PATRIC" id="fig|71421.8.peg.79"/>
<dbReference type="eggNOG" id="COG0215">
    <property type="taxonomic scope" value="Bacteria"/>
</dbReference>
<dbReference type="HOGENOM" id="CLU_013528_0_1_6"/>
<dbReference type="OrthoDB" id="9815130at2"/>
<dbReference type="PhylomeDB" id="P43816"/>
<dbReference type="BioCyc" id="HINF71421:G1GJ1-79-MONOMER"/>
<dbReference type="Proteomes" id="UP000000579">
    <property type="component" value="Chromosome"/>
</dbReference>
<dbReference type="GO" id="GO:0005737">
    <property type="term" value="C:cytoplasm"/>
    <property type="evidence" value="ECO:0000318"/>
    <property type="project" value="GO_Central"/>
</dbReference>
<dbReference type="GO" id="GO:0005829">
    <property type="term" value="C:cytosol"/>
    <property type="evidence" value="ECO:0000318"/>
    <property type="project" value="GO_Central"/>
</dbReference>
<dbReference type="GO" id="GO:0005524">
    <property type="term" value="F:ATP binding"/>
    <property type="evidence" value="ECO:0000318"/>
    <property type="project" value="GO_Central"/>
</dbReference>
<dbReference type="GO" id="GO:0004817">
    <property type="term" value="F:cysteine-tRNA ligase activity"/>
    <property type="evidence" value="ECO:0000318"/>
    <property type="project" value="GO_Central"/>
</dbReference>
<dbReference type="GO" id="GO:0008270">
    <property type="term" value="F:zinc ion binding"/>
    <property type="evidence" value="ECO:0007669"/>
    <property type="project" value="UniProtKB-UniRule"/>
</dbReference>
<dbReference type="GO" id="GO:0006423">
    <property type="term" value="P:cysteinyl-tRNA aminoacylation"/>
    <property type="evidence" value="ECO:0000318"/>
    <property type="project" value="GO_Central"/>
</dbReference>
<dbReference type="CDD" id="cd07963">
    <property type="entry name" value="Anticodon_Ia_Cys"/>
    <property type="match status" value="1"/>
</dbReference>
<dbReference type="CDD" id="cd00672">
    <property type="entry name" value="CysRS_core"/>
    <property type="match status" value="1"/>
</dbReference>
<dbReference type="FunFam" id="1.20.120.1910:FF:000001">
    <property type="entry name" value="Cysteine--tRNA ligase"/>
    <property type="match status" value="1"/>
</dbReference>
<dbReference type="FunFam" id="3.40.50.620:FF:000009">
    <property type="entry name" value="Cysteine--tRNA ligase"/>
    <property type="match status" value="1"/>
</dbReference>
<dbReference type="Gene3D" id="1.20.120.1910">
    <property type="entry name" value="Cysteine-tRNA ligase, C-terminal anti-codon recognition domain"/>
    <property type="match status" value="1"/>
</dbReference>
<dbReference type="Gene3D" id="3.40.50.620">
    <property type="entry name" value="HUPs"/>
    <property type="match status" value="1"/>
</dbReference>
<dbReference type="HAMAP" id="MF_00041">
    <property type="entry name" value="Cys_tRNA_synth"/>
    <property type="match status" value="1"/>
</dbReference>
<dbReference type="InterPro" id="IPR015803">
    <property type="entry name" value="Cys-tRNA-ligase"/>
</dbReference>
<dbReference type="InterPro" id="IPR015273">
    <property type="entry name" value="Cys-tRNA-synt_Ia_DALR"/>
</dbReference>
<dbReference type="InterPro" id="IPR024909">
    <property type="entry name" value="Cys-tRNA/MSH_ligase"/>
</dbReference>
<dbReference type="InterPro" id="IPR056411">
    <property type="entry name" value="CysS_C"/>
</dbReference>
<dbReference type="InterPro" id="IPR014729">
    <property type="entry name" value="Rossmann-like_a/b/a_fold"/>
</dbReference>
<dbReference type="InterPro" id="IPR032678">
    <property type="entry name" value="tRNA-synt_1_cat_dom"/>
</dbReference>
<dbReference type="InterPro" id="IPR009080">
    <property type="entry name" value="tRNAsynth_Ia_anticodon-bd"/>
</dbReference>
<dbReference type="NCBIfam" id="TIGR00435">
    <property type="entry name" value="cysS"/>
    <property type="match status" value="1"/>
</dbReference>
<dbReference type="PANTHER" id="PTHR10890:SF3">
    <property type="entry name" value="CYSTEINE--TRNA LIGASE, CYTOPLASMIC"/>
    <property type="match status" value="1"/>
</dbReference>
<dbReference type="PANTHER" id="PTHR10890">
    <property type="entry name" value="CYSTEINYL-TRNA SYNTHETASE"/>
    <property type="match status" value="1"/>
</dbReference>
<dbReference type="Pfam" id="PF23493">
    <property type="entry name" value="CysS_C"/>
    <property type="match status" value="1"/>
</dbReference>
<dbReference type="Pfam" id="PF09190">
    <property type="entry name" value="DALR_2"/>
    <property type="match status" value="1"/>
</dbReference>
<dbReference type="Pfam" id="PF01406">
    <property type="entry name" value="tRNA-synt_1e"/>
    <property type="match status" value="1"/>
</dbReference>
<dbReference type="PRINTS" id="PR00983">
    <property type="entry name" value="TRNASYNTHCYS"/>
</dbReference>
<dbReference type="SMART" id="SM00840">
    <property type="entry name" value="DALR_2"/>
    <property type="match status" value="1"/>
</dbReference>
<dbReference type="SUPFAM" id="SSF47323">
    <property type="entry name" value="Anticodon-binding domain of a subclass of class I aminoacyl-tRNA synthetases"/>
    <property type="match status" value="1"/>
</dbReference>
<dbReference type="SUPFAM" id="SSF52374">
    <property type="entry name" value="Nucleotidylyl transferase"/>
    <property type="match status" value="1"/>
</dbReference>
<proteinExistence type="inferred from homology"/>
<comment type="catalytic activity">
    <reaction>
        <text>tRNA(Cys) + L-cysteine + ATP = L-cysteinyl-tRNA(Cys) + AMP + diphosphate</text>
        <dbReference type="Rhea" id="RHEA:17773"/>
        <dbReference type="Rhea" id="RHEA-COMP:9661"/>
        <dbReference type="Rhea" id="RHEA-COMP:9679"/>
        <dbReference type="ChEBI" id="CHEBI:30616"/>
        <dbReference type="ChEBI" id="CHEBI:33019"/>
        <dbReference type="ChEBI" id="CHEBI:35235"/>
        <dbReference type="ChEBI" id="CHEBI:78442"/>
        <dbReference type="ChEBI" id="CHEBI:78517"/>
        <dbReference type="ChEBI" id="CHEBI:456215"/>
        <dbReference type="EC" id="6.1.1.16"/>
    </reaction>
</comment>
<comment type="cofactor">
    <cofactor evidence="1">
        <name>Zn(2+)</name>
        <dbReference type="ChEBI" id="CHEBI:29105"/>
    </cofactor>
    <text evidence="1">Binds 1 zinc ion per subunit.</text>
</comment>
<comment type="subunit">
    <text evidence="1">Monomer.</text>
</comment>
<comment type="subcellular location">
    <subcellularLocation>
        <location evidence="1">Cytoplasm</location>
    </subcellularLocation>
</comment>
<comment type="similarity">
    <text evidence="2">Belongs to the class-I aminoacyl-tRNA synthetase family.</text>
</comment>
<feature type="chain" id="PRO_0000159406" description="Cysteine--tRNA ligase">
    <location>
        <begin position="1"/>
        <end position="459"/>
    </location>
</feature>
<feature type="short sequence motif" description="'HIGH' region">
    <location>
        <begin position="30"/>
        <end position="40"/>
    </location>
</feature>
<feature type="short sequence motif" description="'KMSKS' region">
    <location>
        <begin position="266"/>
        <end position="270"/>
    </location>
</feature>
<feature type="binding site" evidence="1">
    <location>
        <position position="28"/>
    </location>
    <ligand>
        <name>Zn(2+)</name>
        <dbReference type="ChEBI" id="CHEBI:29105"/>
    </ligand>
</feature>
<feature type="binding site" evidence="1">
    <location>
        <position position="209"/>
    </location>
    <ligand>
        <name>Zn(2+)</name>
        <dbReference type="ChEBI" id="CHEBI:29105"/>
    </ligand>
</feature>
<feature type="binding site" evidence="1">
    <location>
        <position position="234"/>
    </location>
    <ligand>
        <name>Zn(2+)</name>
        <dbReference type="ChEBI" id="CHEBI:29105"/>
    </ligand>
</feature>
<feature type="binding site" evidence="1">
    <location>
        <position position="238"/>
    </location>
    <ligand>
        <name>Zn(2+)</name>
        <dbReference type="ChEBI" id="CHEBI:29105"/>
    </ligand>
</feature>
<feature type="binding site" evidence="1">
    <location>
        <position position="269"/>
    </location>
    <ligand>
        <name>ATP</name>
        <dbReference type="ChEBI" id="CHEBI:30616"/>
    </ligand>
</feature>
<protein>
    <recommendedName>
        <fullName>Cysteine--tRNA ligase</fullName>
        <ecNumber>6.1.1.16</ecNumber>
    </recommendedName>
    <alternativeName>
        <fullName>Cysteinyl-tRNA synthetase</fullName>
        <shortName>CysRS</shortName>
    </alternativeName>
</protein>
<keyword id="KW-0030">Aminoacyl-tRNA synthetase</keyword>
<keyword id="KW-0067">ATP-binding</keyword>
<keyword id="KW-0963">Cytoplasm</keyword>
<keyword id="KW-0436">Ligase</keyword>
<keyword id="KW-0479">Metal-binding</keyword>
<keyword id="KW-0547">Nucleotide-binding</keyword>
<keyword id="KW-0648">Protein biosynthesis</keyword>
<keyword id="KW-1185">Reference proteome</keyword>
<keyword id="KW-0862">Zinc</keyword>
<accession>P43816</accession>
<name>SYC_HAEIN</name>
<reference key="1">
    <citation type="journal article" date="1995" name="Science">
        <title>Whole-genome random sequencing and assembly of Haemophilus influenzae Rd.</title>
        <authorList>
            <person name="Fleischmann R.D."/>
            <person name="Adams M.D."/>
            <person name="White O."/>
            <person name="Clayton R.A."/>
            <person name="Kirkness E.F."/>
            <person name="Kerlavage A.R."/>
            <person name="Bult C.J."/>
            <person name="Tomb J.-F."/>
            <person name="Dougherty B.A."/>
            <person name="Merrick J.M."/>
            <person name="McKenney K."/>
            <person name="Sutton G.G."/>
            <person name="FitzHugh W."/>
            <person name="Fields C.A."/>
            <person name="Gocayne J.D."/>
            <person name="Scott J.D."/>
            <person name="Shirley R."/>
            <person name="Liu L.-I."/>
            <person name="Glodek A."/>
            <person name="Kelley J.M."/>
            <person name="Weidman J.F."/>
            <person name="Phillips C.A."/>
            <person name="Spriggs T."/>
            <person name="Hedblom E."/>
            <person name="Cotton M.D."/>
            <person name="Utterback T.R."/>
            <person name="Hanna M.C."/>
            <person name="Nguyen D.T."/>
            <person name="Saudek D.M."/>
            <person name="Brandon R.C."/>
            <person name="Fine L.D."/>
            <person name="Fritchman J.L."/>
            <person name="Fuhrmann J.L."/>
            <person name="Geoghagen N.S.M."/>
            <person name="Gnehm C.L."/>
            <person name="McDonald L.A."/>
            <person name="Small K.V."/>
            <person name="Fraser C.M."/>
            <person name="Smith H.O."/>
            <person name="Venter J.C."/>
        </authorList>
    </citation>
    <scope>NUCLEOTIDE SEQUENCE [LARGE SCALE GENOMIC DNA]</scope>
    <source>
        <strain>ATCC 51907 / DSM 11121 / KW20 / Rd</strain>
    </source>
</reference>
<gene>
    <name type="primary">cysS</name>
    <name type="ordered locus">HI_0078</name>
</gene>
<sequence>MLKIFNTLTREKEIFKPIHENKVGMYVCGVTVYDLCHIGHGRTFVCFDVIARYLRSLGYDLTYVRNITDVDDKIIKRALENKETCDQLVDRMVQEMYKDFDALNVLRPDFEPRATHHIPEIIEIVEKLIKRGHAYVADNGDVMFDVESFKEYGKLSRQDLEQLQAGARIEINEIKKNPMDFVLWKMSKENEPSWASPWGAGRPGWHIECSAMNCKQLGEYFDIHGGGSDLMFPHHENEIAQSCCAHGGQYVNYWIHSGMIMVDKEKMSKSLGNFFTIRDVLNHYNAEAVRYFLLTAHYRSQLNYSEENLNLAQGALERLYTALRGTDQSAVAFGGENFVATFREAMDDDFNTPNALSVLFEMAREINKLKTEDVEKANGLAARLRELGAILGLLQQEPEKFLQAGSNDDEVAKIEALIKQRNEARTAKDWSAADSARNELTAMGIVLEDGPNGTTWRKQ</sequence>
<evidence type="ECO:0000250" key="1"/>
<evidence type="ECO:0000305" key="2"/>